<sequence length="182" mass="20780">MMELQELYKKTITPALQKEFGFKSVMAVPRLEKITLNMGLGEAVADKKVIERAMDDMIKISGQKPLITYARKSEAGFKIRAGWPIGCKVTLRRDRMYEFLKRLISIAIPRIRDFRGLSPKSFDGRGNYSLGIREQIVFPEIQYDKVDAIRGMDITITTTARTDEEGRALLKAFGFPLKDESR</sequence>
<evidence type="ECO:0000255" key="1">
    <source>
        <dbReference type="HAMAP-Rule" id="MF_01333"/>
    </source>
</evidence>
<evidence type="ECO:0000305" key="2"/>
<name>RL5_COXB1</name>
<proteinExistence type="inferred from homology"/>
<gene>
    <name evidence="1" type="primary">rplE</name>
    <name type="ordered locus">CbuK_0445</name>
</gene>
<comment type="function">
    <text evidence="1">This is one of the proteins that bind and probably mediate the attachment of the 5S RNA into the large ribosomal subunit, where it forms part of the central protuberance. In the 70S ribosome it contacts protein S13 of the 30S subunit (bridge B1b), connecting the 2 subunits; this bridge is implicated in subunit movement. Contacts the P site tRNA; the 5S rRNA and some of its associated proteins might help stabilize positioning of ribosome-bound tRNAs.</text>
</comment>
<comment type="subunit">
    <text evidence="1">Part of the 50S ribosomal subunit; part of the 5S rRNA/L5/L18/L25 subcomplex. Contacts the 5S rRNA and the P site tRNA. Forms a bridge to the 30S subunit in the 70S ribosome.</text>
</comment>
<comment type="similarity">
    <text evidence="1">Belongs to the universal ribosomal protein uL5 family.</text>
</comment>
<protein>
    <recommendedName>
        <fullName evidence="1">Large ribosomal subunit protein uL5</fullName>
    </recommendedName>
    <alternativeName>
        <fullName evidence="2">50S ribosomal protein L5</fullName>
    </alternativeName>
</protein>
<keyword id="KW-0687">Ribonucleoprotein</keyword>
<keyword id="KW-0689">Ribosomal protein</keyword>
<keyword id="KW-0694">RNA-binding</keyword>
<keyword id="KW-0699">rRNA-binding</keyword>
<keyword id="KW-0820">tRNA-binding</keyword>
<reference key="1">
    <citation type="journal article" date="2009" name="Infect. Immun.">
        <title>Comparative genomics reveal extensive transposon-mediated genomic plasticity and diversity among potential effector proteins within the genus Coxiella.</title>
        <authorList>
            <person name="Beare P.A."/>
            <person name="Unsworth N."/>
            <person name="Andoh M."/>
            <person name="Voth D.E."/>
            <person name="Omsland A."/>
            <person name="Gilk S.D."/>
            <person name="Williams K.P."/>
            <person name="Sobral B.W."/>
            <person name="Kupko J.J. III"/>
            <person name="Porcella S.F."/>
            <person name="Samuel J.E."/>
            <person name="Heinzen R.A."/>
        </authorList>
    </citation>
    <scope>NUCLEOTIDE SEQUENCE [LARGE SCALE GENOMIC DNA]</scope>
    <source>
        <strain>CbuK_Q154</strain>
    </source>
</reference>
<dbReference type="EMBL" id="CP001020">
    <property type="protein sequence ID" value="ACJ19728.1"/>
    <property type="molecule type" value="Genomic_DNA"/>
</dbReference>
<dbReference type="RefSeq" id="WP_005771521.1">
    <property type="nucleotide sequence ID" value="NC_011528.1"/>
</dbReference>
<dbReference type="SMR" id="B6J5E4"/>
<dbReference type="KEGG" id="cbc:CbuK_0445"/>
<dbReference type="HOGENOM" id="CLU_061015_2_1_6"/>
<dbReference type="GO" id="GO:1990904">
    <property type="term" value="C:ribonucleoprotein complex"/>
    <property type="evidence" value="ECO:0007669"/>
    <property type="project" value="UniProtKB-KW"/>
</dbReference>
<dbReference type="GO" id="GO:0005840">
    <property type="term" value="C:ribosome"/>
    <property type="evidence" value="ECO:0007669"/>
    <property type="project" value="UniProtKB-KW"/>
</dbReference>
<dbReference type="GO" id="GO:0019843">
    <property type="term" value="F:rRNA binding"/>
    <property type="evidence" value="ECO:0007669"/>
    <property type="project" value="UniProtKB-UniRule"/>
</dbReference>
<dbReference type="GO" id="GO:0003735">
    <property type="term" value="F:structural constituent of ribosome"/>
    <property type="evidence" value="ECO:0007669"/>
    <property type="project" value="InterPro"/>
</dbReference>
<dbReference type="GO" id="GO:0000049">
    <property type="term" value="F:tRNA binding"/>
    <property type="evidence" value="ECO:0007669"/>
    <property type="project" value="UniProtKB-UniRule"/>
</dbReference>
<dbReference type="GO" id="GO:0006412">
    <property type="term" value="P:translation"/>
    <property type="evidence" value="ECO:0007669"/>
    <property type="project" value="UniProtKB-UniRule"/>
</dbReference>
<dbReference type="FunFam" id="3.30.1440.10:FF:000001">
    <property type="entry name" value="50S ribosomal protein L5"/>
    <property type="match status" value="1"/>
</dbReference>
<dbReference type="Gene3D" id="3.30.1440.10">
    <property type="match status" value="1"/>
</dbReference>
<dbReference type="HAMAP" id="MF_01333_B">
    <property type="entry name" value="Ribosomal_uL5_B"/>
    <property type="match status" value="1"/>
</dbReference>
<dbReference type="InterPro" id="IPR002132">
    <property type="entry name" value="Ribosomal_uL5"/>
</dbReference>
<dbReference type="InterPro" id="IPR020930">
    <property type="entry name" value="Ribosomal_uL5_bac-type"/>
</dbReference>
<dbReference type="InterPro" id="IPR031309">
    <property type="entry name" value="Ribosomal_uL5_C"/>
</dbReference>
<dbReference type="InterPro" id="IPR020929">
    <property type="entry name" value="Ribosomal_uL5_CS"/>
</dbReference>
<dbReference type="InterPro" id="IPR022803">
    <property type="entry name" value="Ribosomal_uL5_dom_sf"/>
</dbReference>
<dbReference type="InterPro" id="IPR031310">
    <property type="entry name" value="Ribosomal_uL5_N"/>
</dbReference>
<dbReference type="NCBIfam" id="NF000585">
    <property type="entry name" value="PRK00010.1"/>
    <property type="match status" value="1"/>
</dbReference>
<dbReference type="PANTHER" id="PTHR11994">
    <property type="entry name" value="60S RIBOSOMAL PROTEIN L11-RELATED"/>
    <property type="match status" value="1"/>
</dbReference>
<dbReference type="Pfam" id="PF00281">
    <property type="entry name" value="Ribosomal_L5"/>
    <property type="match status" value="1"/>
</dbReference>
<dbReference type="Pfam" id="PF00673">
    <property type="entry name" value="Ribosomal_L5_C"/>
    <property type="match status" value="1"/>
</dbReference>
<dbReference type="PIRSF" id="PIRSF002161">
    <property type="entry name" value="Ribosomal_L5"/>
    <property type="match status" value="1"/>
</dbReference>
<dbReference type="SUPFAM" id="SSF55282">
    <property type="entry name" value="RL5-like"/>
    <property type="match status" value="1"/>
</dbReference>
<dbReference type="PROSITE" id="PS00358">
    <property type="entry name" value="RIBOSOMAL_L5"/>
    <property type="match status" value="1"/>
</dbReference>
<feature type="chain" id="PRO_1000142381" description="Large ribosomal subunit protein uL5">
    <location>
        <begin position="1"/>
        <end position="182"/>
    </location>
</feature>
<accession>B6J5E4</accession>
<organism>
    <name type="scientific">Coxiella burnetii (strain CbuK_Q154)</name>
    <name type="common">Coxiella burnetii (strain Q154)</name>
    <dbReference type="NCBI Taxonomy" id="434924"/>
    <lineage>
        <taxon>Bacteria</taxon>
        <taxon>Pseudomonadati</taxon>
        <taxon>Pseudomonadota</taxon>
        <taxon>Gammaproteobacteria</taxon>
        <taxon>Legionellales</taxon>
        <taxon>Coxiellaceae</taxon>
        <taxon>Coxiella</taxon>
    </lineage>
</organism>